<protein>
    <recommendedName>
        <fullName>RNA polymerase II holoenzyme cyclin-like subunit</fullName>
    </recommendedName>
</protein>
<feature type="chain" id="PRO_0000314271" description="RNA polymerase II holoenzyme cyclin-like subunit">
    <location>
        <begin position="1"/>
        <end position="339"/>
    </location>
</feature>
<feature type="domain" description="Cyclin N-terminal">
    <location>
        <begin position="93"/>
        <end position="194"/>
    </location>
</feature>
<feature type="region of interest" description="Disordered" evidence="2">
    <location>
        <begin position="48"/>
        <end position="67"/>
    </location>
</feature>
<feature type="compositionally biased region" description="Low complexity" evidence="2">
    <location>
        <begin position="49"/>
        <end position="60"/>
    </location>
</feature>
<organism>
    <name type="scientific">Candida glabrata (strain ATCC 2001 / BCRC 20586 / JCM 3761 / NBRC 0622 / NRRL Y-65 / CBS 138)</name>
    <name type="common">Yeast</name>
    <name type="synonym">Nakaseomyces glabratus</name>
    <dbReference type="NCBI Taxonomy" id="284593"/>
    <lineage>
        <taxon>Eukaryota</taxon>
        <taxon>Fungi</taxon>
        <taxon>Dikarya</taxon>
        <taxon>Ascomycota</taxon>
        <taxon>Saccharomycotina</taxon>
        <taxon>Saccharomycetes</taxon>
        <taxon>Saccharomycetales</taxon>
        <taxon>Saccharomycetaceae</taxon>
        <taxon>Nakaseomyces</taxon>
    </lineage>
</organism>
<accession>Q6FJE8</accession>
<comment type="function">
    <text evidence="1">Component of the SRB8-11 complex. The SRB8-11 complex is a regulatory module of the Mediator complex which is itself involved in regulation of basal and activated RNA polymerase II-dependent transcription. The SRB8-11 complex may be involved in the transcriptional repression of a subset of genes regulated by Mediator. It may inhibit the association of the Mediator complex with RNA polymerase II to form the holoenzyme complex. The SRB8-11 complex phosphorylates the C-terminal domain (CTD) of the largest subunit of RNA polymerase II (By similarity).</text>
</comment>
<comment type="subunit">
    <text evidence="1">Component of the SRB8-11 complex, a regulatory module of the Mediator complex.</text>
</comment>
<comment type="subcellular location">
    <subcellularLocation>
        <location evidence="3">Nucleus</location>
    </subcellularLocation>
</comment>
<comment type="similarity">
    <text evidence="3">Belongs to the cyclin family. Cyclin C subfamily.</text>
</comment>
<proteinExistence type="inferred from homology"/>
<keyword id="KW-0010">Activator</keyword>
<keyword id="KW-0195">Cyclin</keyword>
<keyword id="KW-0539">Nucleus</keyword>
<keyword id="KW-1185">Reference proteome</keyword>
<keyword id="KW-0678">Repressor</keyword>
<keyword id="KW-0804">Transcription</keyword>
<keyword id="KW-0805">Transcription regulation</keyword>
<name>SSN8_CANGA</name>
<dbReference type="EMBL" id="CR380959">
    <property type="protein sequence ID" value="CAG62622.1"/>
    <property type="molecule type" value="Genomic_DNA"/>
</dbReference>
<dbReference type="RefSeq" id="XP_449646.1">
    <property type="nucleotide sequence ID" value="XM_449646.1"/>
</dbReference>
<dbReference type="SMR" id="Q6FJE8"/>
<dbReference type="FunCoup" id="Q6FJE8">
    <property type="interactions" value="1033"/>
</dbReference>
<dbReference type="STRING" id="284593.Q6FJE8"/>
<dbReference type="EnsemblFungi" id="CAGL0M06875g-T">
    <property type="protein sequence ID" value="CAGL0M06875g-T-p1"/>
    <property type="gene ID" value="CAGL0M06875g"/>
</dbReference>
<dbReference type="KEGG" id="cgr:2891695"/>
<dbReference type="CGD" id="CAL0136591">
    <property type="gene designation" value="CAGL0M06875g"/>
</dbReference>
<dbReference type="VEuPathDB" id="FungiDB:B1J91_M06875g"/>
<dbReference type="VEuPathDB" id="FungiDB:CAGL0M06875g"/>
<dbReference type="eggNOG" id="KOG0794">
    <property type="taxonomic scope" value="Eukaryota"/>
</dbReference>
<dbReference type="HOGENOM" id="CLU_034754_2_1_1"/>
<dbReference type="InParanoid" id="Q6FJE8"/>
<dbReference type="OMA" id="HIIAMAC"/>
<dbReference type="Proteomes" id="UP000002428">
    <property type="component" value="Chromosome M"/>
</dbReference>
<dbReference type="GO" id="GO:1990508">
    <property type="term" value="C:CKM complex"/>
    <property type="evidence" value="ECO:0007669"/>
    <property type="project" value="EnsemblFungi"/>
</dbReference>
<dbReference type="GO" id="GO:0016592">
    <property type="term" value="C:mediator complex"/>
    <property type="evidence" value="ECO:0007669"/>
    <property type="project" value="EnsemblFungi"/>
</dbReference>
<dbReference type="GO" id="GO:0016538">
    <property type="term" value="F:cyclin-dependent protein serine/threonine kinase regulator activity"/>
    <property type="evidence" value="ECO:0007669"/>
    <property type="project" value="EnsemblFungi"/>
</dbReference>
<dbReference type="GO" id="GO:0000979">
    <property type="term" value="F:RNA polymerase II core promoter sequence-specific DNA binding"/>
    <property type="evidence" value="ECO:0007669"/>
    <property type="project" value="EnsemblFungi"/>
</dbReference>
<dbReference type="GO" id="GO:0034605">
    <property type="term" value="P:cellular response to heat"/>
    <property type="evidence" value="ECO:0007669"/>
    <property type="project" value="EnsemblFungi"/>
</dbReference>
<dbReference type="GO" id="GO:0051321">
    <property type="term" value="P:meiotic cell cycle"/>
    <property type="evidence" value="ECO:0007669"/>
    <property type="project" value="EnsemblFungi"/>
</dbReference>
<dbReference type="GO" id="GO:0000122">
    <property type="term" value="P:negative regulation of transcription by RNA polymerase II"/>
    <property type="evidence" value="ECO:0007669"/>
    <property type="project" value="EnsemblFungi"/>
</dbReference>
<dbReference type="GO" id="GO:0000411">
    <property type="term" value="P:positive regulation of transcription by galactose"/>
    <property type="evidence" value="ECO:0007669"/>
    <property type="project" value="EnsemblFungi"/>
</dbReference>
<dbReference type="GO" id="GO:0045944">
    <property type="term" value="P:positive regulation of transcription by RNA polymerase II"/>
    <property type="evidence" value="ECO:0007669"/>
    <property type="project" value="EnsemblFungi"/>
</dbReference>
<dbReference type="CDD" id="cd20513">
    <property type="entry name" value="CYCLIN_CCNC_rpt1"/>
    <property type="match status" value="1"/>
</dbReference>
<dbReference type="CDD" id="cd20546">
    <property type="entry name" value="CYCLIN_SpCG1C_ScCTK2-like_rpt2"/>
    <property type="match status" value="1"/>
</dbReference>
<dbReference type="FunFam" id="1.10.472.10:FF:000117">
    <property type="entry name" value="Mediator complex subunit"/>
    <property type="match status" value="1"/>
</dbReference>
<dbReference type="FunFam" id="1.10.472.10:FF:000077">
    <property type="entry name" value="RNA polymerase II holoenzyme cyclin-like subunit"/>
    <property type="match status" value="1"/>
</dbReference>
<dbReference type="Gene3D" id="1.10.472.10">
    <property type="entry name" value="Cyclin-like"/>
    <property type="match status" value="2"/>
</dbReference>
<dbReference type="InterPro" id="IPR013763">
    <property type="entry name" value="Cyclin-like_dom"/>
</dbReference>
<dbReference type="InterPro" id="IPR036915">
    <property type="entry name" value="Cyclin-like_sf"/>
</dbReference>
<dbReference type="InterPro" id="IPR043198">
    <property type="entry name" value="Cyclin/Ssn8"/>
</dbReference>
<dbReference type="InterPro" id="IPR006671">
    <property type="entry name" value="Cyclin_N"/>
</dbReference>
<dbReference type="PANTHER" id="PTHR10026">
    <property type="entry name" value="CYCLIN"/>
    <property type="match status" value="1"/>
</dbReference>
<dbReference type="Pfam" id="PF00134">
    <property type="entry name" value="Cyclin_N"/>
    <property type="match status" value="1"/>
</dbReference>
<dbReference type="PIRSF" id="PIRSF028758">
    <property type="entry name" value="Cyclin, C/H/G types"/>
    <property type="match status" value="1"/>
</dbReference>
<dbReference type="SMART" id="SM00385">
    <property type="entry name" value="CYCLIN"/>
    <property type="match status" value="1"/>
</dbReference>
<dbReference type="SUPFAM" id="SSF47954">
    <property type="entry name" value="Cyclin-like"/>
    <property type="match status" value="2"/>
</dbReference>
<gene>
    <name type="primary">SSN8</name>
    <name type="ordered locus">CAGL0M06875g</name>
</gene>
<reference key="1">
    <citation type="journal article" date="2004" name="Nature">
        <title>Genome evolution in yeasts.</title>
        <authorList>
            <person name="Dujon B."/>
            <person name="Sherman D."/>
            <person name="Fischer G."/>
            <person name="Durrens P."/>
            <person name="Casaregola S."/>
            <person name="Lafontaine I."/>
            <person name="de Montigny J."/>
            <person name="Marck C."/>
            <person name="Neuveglise C."/>
            <person name="Talla E."/>
            <person name="Goffard N."/>
            <person name="Frangeul L."/>
            <person name="Aigle M."/>
            <person name="Anthouard V."/>
            <person name="Babour A."/>
            <person name="Barbe V."/>
            <person name="Barnay S."/>
            <person name="Blanchin S."/>
            <person name="Beckerich J.-M."/>
            <person name="Beyne E."/>
            <person name="Bleykasten C."/>
            <person name="Boisrame A."/>
            <person name="Boyer J."/>
            <person name="Cattolico L."/>
            <person name="Confanioleri F."/>
            <person name="de Daruvar A."/>
            <person name="Despons L."/>
            <person name="Fabre E."/>
            <person name="Fairhead C."/>
            <person name="Ferry-Dumazet H."/>
            <person name="Groppi A."/>
            <person name="Hantraye F."/>
            <person name="Hennequin C."/>
            <person name="Jauniaux N."/>
            <person name="Joyet P."/>
            <person name="Kachouri R."/>
            <person name="Kerrest A."/>
            <person name="Koszul R."/>
            <person name="Lemaire M."/>
            <person name="Lesur I."/>
            <person name="Ma L."/>
            <person name="Muller H."/>
            <person name="Nicaud J.-M."/>
            <person name="Nikolski M."/>
            <person name="Oztas S."/>
            <person name="Ozier-Kalogeropoulos O."/>
            <person name="Pellenz S."/>
            <person name="Potier S."/>
            <person name="Richard G.-F."/>
            <person name="Straub M.-L."/>
            <person name="Suleau A."/>
            <person name="Swennen D."/>
            <person name="Tekaia F."/>
            <person name="Wesolowski-Louvel M."/>
            <person name="Westhof E."/>
            <person name="Wirth B."/>
            <person name="Zeniou-Meyer M."/>
            <person name="Zivanovic Y."/>
            <person name="Bolotin-Fukuhara M."/>
            <person name="Thierry A."/>
            <person name="Bouchier C."/>
            <person name="Caudron B."/>
            <person name="Scarpelli C."/>
            <person name="Gaillardin C."/>
            <person name="Weissenbach J."/>
            <person name="Wincker P."/>
            <person name="Souciet J.-L."/>
        </authorList>
    </citation>
    <scope>NUCLEOTIDE SEQUENCE [LARGE SCALE GENOMIC DNA]</scope>
    <source>
        <strain>ATCC 2001 / BCRC 20586 / JCM 3761 / NBRC 0622 / NRRL Y-65 / CBS 138</strain>
    </source>
</reference>
<sequence length="339" mass="39489">MSGSYWTSMQRQKWQHTKPSLARERQRLWVMECQLFPQGLNIIVDSKPNSADSSNGNAANNGGGNGRSQLVATTKNIPITHRDLHYDKDYNLRIYCYFLIMKLGRRLNIRQYALATAHIYLSRFLLKASVREVNLYLLVTTCVYLACKVEECPQYIRTLVSEARSLWPEFIPPDPTKVTEFEFYLIEELQCYLIVHHPYKSMEQIVEALKEEPFKLTFTSDELQNCWSLINDSFINDVHLTYAPHIIAMACLFITVSIQGSNTKELSLTSAVTETLTSQSSLTPQQQTFFRFLAESHVDLEEVMDTIQQQIILYDHWDRYHEPWIKYLLHTLYLRPLSA</sequence>
<evidence type="ECO:0000250" key="1"/>
<evidence type="ECO:0000256" key="2">
    <source>
        <dbReference type="SAM" id="MobiDB-lite"/>
    </source>
</evidence>
<evidence type="ECO:0000305" key="3"/>